<comment type="function">
    <text evidence="1">Catalytic subunit of the tagatose-1,6-bisphosphate aldolase GatYZ, which catalyzes the reversible aldol condensation of dihydroxyacetone phosphate (DHAP or glycerone-phosphate) with glyceraldehyde 3-phosphate (G3P) to produce tagatose 1,6-bisphosphate (TBP). Requires GatZ subunit for full activity and stability. Is involved in the catabolism of galactitol.</text>
</comment>
<comment type="catalytic activity">
    <reaction evidence="1">
        <text>D-tagatofuranose 1,6-bisphosphate = D-glyceraldehyde 3-phosphate + dihydroxyacetone phosphate</text>
        <dbReference type="Rhea" id="RHEA:22948"/>
        <dbReference type="ChEBI" id="CHEBI:57642"/>
        <dbReference type="ChEBI" id="CHEBI:58694"/>
        <dbReference type="ChEBI" id="CHEBI:59776"/>
        <dbReference type="EC" id="4.1.2.40"/>
    </reaction>
</comment>
<comment type="cofactor">
    <cofactor evidence="1">
        <name>Zn(2+)</name>
        <dbReference type="ChEBI" id="CHEBI:29105"/>
    </cofactor>
    <text evidence="1">Binds 1 zinc ion per subunit.</text>
</comment>
<comment type="pathway">
    <text evidence="1">Carbohydrate metabolism; D-tagatose 6-phosphate degradation; D-glyceraldehyde 3-phosphate and glycerone phosphate from D-tagatose 6-phosphate: step 2/2.</text>
</comment>
<comment type="subunit">
    <text evidence="1">Forms a complex with GatZ.</text>
</comment>
<comment type="similarity">
    <text evidence="1">Belongs to the class II fructose-bisphosphate aldolase family. TagBP aldolase GatY subfamily.</text>
</comment>
<reference key="1">
    <citation type="submission" date="2007-11" db="EMBL/GenBank/DDBJ databases">
        <authorList>
            <consortium name="The Salmonella enterica serovar Paratyphi B Genome Sequencing Project"/>
            <person name="McClelland M."/>
            <person name="Sanderson E.K."/>
            <person name="Porwollik S."/>
            <person name="Spieth J."/>
            <person name="Clifton W.S."/>
            <person name="Fulton R."/>
            <person name="Cordes M."/>
            <person name="Wollam A."/>
            <person name="Shah N."/>
            <person name="Pepin K."/>
            <person name="Bhonagiri V."/>
            <person name="Nash W."/>
            <person name="Johnson M."/>
            <person name="Thiruvilangam P."/>
            <person name="Wilson R."/>
        </authorList>
    </citation>
    <scope>NUCLEOTIDE SEQUENCE [LARGE SCALE GENOMIC DNA]</scope>
    <source>
        <strain>ATCC BAA-1250 / SPB7</strain>
    </source>
</reference>
<dbReference type="EC" id="4.1.2.40" evidence="1"/>
<dbReference type="EMBL" id="CP000886">
    <property type="protein sequence ID" value="ABX69390.1"/>
    <property type="molecule type" value="Genomic_DNA"/>
</dbReference>
<dbReference type="RefSeq" id="WP_000469982.1">
    <property type="nucleotide sequence ID" value="NC_010102.1"/>
</dbReference>
<dbReference type="SMR" id="A9N6Z8"/>
<dbReference type="KEGG" id="spq:SPAB_04063"/>
<dbReference type="PATRIC" id="fig|1016998.12.peg.3827"/>
<dbReference type="HOGENOM" id="CLU_040088_0_1_6"/>
<dbReference type="BioCyc" id="SENT1016998:SPAB_RS16485-MONOMER"/>
<dbReference type="UniPathway" id="UPA00704">
    <property type="reaction ID" value="UER00716"/>
</dbReference>
<dbReference type="Proteomes" id="UP000008556">
    <property type="component" value="Chromosome"/>
</dbReference>
<dbReference type="GO" id="GO:0005829">
    <property type="term" value="C:cytosol"/>
    <property type="evidence" value="ECO:0007669"/>
    <property type="project" value="TreeGrafter"/>
</dbReference>
<dbReference type="GO" id="GO:0009025">
    <property type="term" value="F:tagatose-bisphosphate aldolase activity"/>
    <property type="evidence" value="ECO:0007669"/>
    <property type="project" value="UniProtKB-UniRule"/>
</dbReference>
<dbReference type="GO" id="GO:0008270">
    <property type="term" value="F:zinc ion binding"/>
    <property type="evidence" value="ECO:0007669"/>
    <property type="project" value="UniProtKB-UniRule"/>
</dbReference>
<dbReference type="GO" id="GO:2001059">
    <property type="term" value="P:D-tagatose 6-phosphate catabolic process"/>
    <property type="evidence" value="ECO:0007669"/>
    <property type="project" value="UniProtKB-UniRule"/>
</dbReference>
<dbReference type="GO" id="GO:0019404">
    <property type="term" value="P:galactitol catabolic process"/>
    <property type="evidence" value="ECO:0007669"/>
    <property type="project" value="InterPro"/>
</dbReference>
<dbReference type="CDD" id="cd00947">
    <property type="entry name" value="TBP_aldolase_IIB"/>
    <property type="match status" value="1"/>
</dbReference>
<dbReference type="FunFam" id="3.20.20.70:FF:000043">
    <property type="entry name" value="D-tagatose-1,6-bisphosphate aldolase subunit GatY"/>
    <property type="match status" value="1"/>
</dbReference>
<dbReference type="Gene3D" id="3.20.20.70">
    <property type="entry name" value="Aldolase class I"/>
    <property type="match status" value="1"/>
</dbReference>
<dbReference type="HAMAP" id="MF_01294">
    <property type="entry name" value="TagBP_aldolase_GatY"/>
    <property type="match status" value="1"/>
</dbReference>
<dbReference type="InterPro" id="IPR013785">
    <property type="entry name" value="Aldolase_TIM"/>
</dbReference>
<dbReference type="InterPro" id="IPR050246">
    <property type="entry name" value="Class_II_FBP_aldolase"/>
</dbReference>
<dbReference type="InterPro" id="IPR000771">
    <property type="entry name" value="FBA_II"/>
</dbReference>
<dbReference type="InterPro" id="IPR011288">
    <property type="entry name" value="TagBP_ald_KbaY/GatY"/>
</dbReference>
<dbReference type="InterPro" id="IPR023955">
    <property type="entry name" value="TagBP_aldolase_GatY"/>
</dbReference>
<dbReference type="NCBIfam" id="TIGR00167">
    <property type="entry name" value="cbbA"/>
    <property type="match status" value="1"/>
</dbReference>
<dbReference type="NCBIfam" id="NF006626">
    <property type="entry name" value="PRK09195.1"/>
    <property type="match status" value="1"/>
</dbReference>
<dbReference type="NCBIfam" id="NF009374">
    <property type="entry name" value="PRK12737.1"/>
    <property type="match status" value="1"/>
</dbReference>
<dbReference type="NCBIfam" id="TIGR01858">
    <property type="entry name" value="tag_bisphos_ald"/>
    <property type="match status" value="1"/>
</dbReference>
<dbReference type="PANTHER" id="PTHR30304">
    <property type="entry name" value="D-TAGATOSE-1,6-BISPHOSPHATE ALDOLASE"/>
    <property type="match status" value="1"/>
</dbReference>
<dbReference type="PANTHER" id="PTHR30304:SF0">
    <property type="entry name" value="D-TAGATOSE-1,6-BISPHOSPHATE ALDOLASE SUBUNIT GATY-RELATED"/>
    <property type="match status" value="1"/>
</dbReference>
<dbReference type="Pfam" id="PF01116">
    <property type="entry name" value="F_bP_aldolase"/>
    <property type="match status" value="1"/>
</dbReference>
<dbReference type="PIRSF" id="PIRSF001359">
    <property type="entry name" value="F_bP_aldolase_II"/>
    <property type="match status" value="1"/>
</dbReference>
<dbReference type="SUPFAM" id="SSF51569">
    <property type="entry name" value="Aldolase"/>
    <property type="match status" value="1"/>
</dbReference>
<dbReference type="PROSITE" id="PS00602">
    <property type="entry name" value="ALDOLASE_CLASS_II_1"/>
    <property type="match status" value="1"/>
</dbReference>
<dbReference type="PROSITE" id="PS00806">
    <property type="entry name" value="ALDOLASE_CLASS_II_2"/>
    <property type="match status" value="1"/>
</dbReference>
<proteinExistence type="inferred from homology"/>
<sequence>MFIISSKNMLQKAQHAGYAVPAFNIHNLETLQVVVETAAEMRSPLIVAGTPGTFSYAGMGNIVAIAGDLAREYNLPLAIHLDHHESLADIESKVMAGIRSVMIDGSHFPFEENVALVKSVVDFCHRYDTSVEAELGRLGGIEDDLVVDSKDALYTNPQQAREFVAHTGIDSLAVAIGTAHGMYAAEPKLDFERLAEIRALVDIPLVLHGASGLPESDIRQAISLGVCKVNVATELKIAFSDALKEYFLQNPKANDPRHYMQPAKQAMKEVVRKVIHVCGCEGQL</sequence>
<protein>
    <recommendedName>
        <fullName evidence="1">D-tagatose-1,6-bisphosphate aldolase subunit GatY</fullName>
        <shortName evidence="1">TBPA</shortName>
        <shortName evidence="1">TagBP aldolase</shortName>
        <ecNumber evidence="1">4.1.2.40</ecNumber>
    </recommendedName>
    <alternativeName>
        <fullName evidence="1">D-tagatose-bisphosphate aldolase class II</fullName>
    </alternativeName>
    <alternativeName>
        <fullName evidence="1">Tagatose-bisphosphate aldolase</fullName>
    </alternativeName>
</protein>
<feature type="chain" id="PRO_0000355349" description="D-tagatose-1,6-bisphosphate aldolase subunit GatY">
    <location>
        <begin position="1"/>
        <end position="284"/>
    </location>
</feature>
<feature type="active site" description="Proton donor" evidence="1">
    <location>
        <position position="82"/>
    </location>
</feature>
<feature type="binding site" evidence="1">
    <location>
        <position position="83"/>
    </location>
    <ligand>
        <name>Zn(2+)</name>
        <dbReference type="ChEBI" id="CHEBI:29105"/>
        <note>catalytic</note>
    </ligand>
</feature>
<feature type="binding site" evidence="1">
    <location>
        <position position="180"/>
    </location>
    <ligand>
        <name>Zn(2+)</name>
        <dbReference type="ChEBI" id="CHEBI:29105"/>
        <note>catalytic</note>
    </ligand>
</feature>
<feature type="binding site" evidence="1">
    <location>
        <position position="181"/>
    </location>
    <ligand>
        <name>dihydroxyacetone phosphate</name>
        <dbReference type="ChEBI" id="CHEBI:57642"/>
    </ligand>
</feature>
<feature type="binding site" evidence="1">
    <location>
        <position position="208"/>
    </location>
    <ligand>
        <name>Zn(2+)</name>
        <dbReference type="ChEBI" id="CHEBI:29105"/>
        <note>catalytic</note>
    </ligand>
</feature>
<feature type="binding site" evidence="1">
    <location>
        <begin position="209"/>
        <end position="211"/>
    </location>
    <ligand>
        <name>dihydroxyacetone phosphate</name>
        <dbReference type="ChEBI" id="CHEBI:57642"/>
    </ligand>
</feature>
<feature type="binding site" evidence="1">
    <location>
        <begin position="230"/>
        <end position="233"/>
    </location>
    <ligand>
        <name>dihydroxyacetone phosphate</name>
        <dbReference type="ChEBI" id="CHEBI:57642"/>
    </ligand>
</feature>
<accession>A9N6Z8</accession>
<organism>
    <name type="scientific">Salmonella paratyphi B (strain ATCC BAA-1250 / SPB7)</name>
    <dbReference type="NCBI Taxonomy" id="1016998"/>
    <lineage>
        <taxon>Bacteria</taxon>
        <taxon>Pseudomonadati</taxon>
        <taxon>Pseudomonadota</taxon>
        <taxon>Gammaproteobacteria</taxon>
        <taxon>Enterobacterales</taxon>
        <taxon>Enterobacteriaceae</taxon>
        <taxon>Salmonella</taxon>
    </lineage>
</organism>
<keyword id="KW-0298">Galactitol metabolism</keyword>
<keyword id="KW-0456">Lyase</keyword>
<keyword id="KW-0479">Metal-binding</keyword>
<keyword id="KW-0862">Zinc</keyword>
<gene>
    <name evidence="1" type="primary">gatY</name>
    <name type="ordered locus">SPAB_04063</name>
</gene>
<evidence type="ECO:0000255" key="1">
    <source>
        <dbReference type="HAMAP-Rule" id="MF_01294"/>
    </source>
</evidence>
<name>GATY_SALPB</name>